<name>RSMG_BURP1</name>
<dbReference type="EC" id="2.1.1.170" evidence="1"/>
<dbReference type="EMBL" id="CP000124">
    <property type="protein sequence ID" value="ABA48788.1"/>
    <property type="molecule type" value="Genomic_DNA"/>
</dbReference>
<dbReference type="RefSeq" id="WP_004202905.1">
    <property type="nucleotide sequence ID" value="NC_007434.1"/>
</dbReference>
<dbReference type="SMR" id="Q3JXU8"/>
<dbReference type="EnsemblBacteria" id="ABA48788">
    <property type="protein sequence ID" value="ABA48788"/>
    <property type="gene ID" value="BURPS1710b_0189"/>
</dbReference>
<dbReference type="GeneID" id="92980615"/>
<dbReference type="KEGG" id="bpm:BURPS1710b_0189"/>
<dbReference type="HOGENOM" id="CLU_065341_2_0_4"/>
<dbReference type="Proteomes" id="UP000002700">
    <property type="component" value="Chromosome I"/>
</dbReference>
<dbReference type="GO" id="GO:0005829">
    <property type="term" value="C:cytosol"/>
    <property type="evidence" value="ECO:0007669"/>
    <property type="project" value="TreeGrafter"/>
</dbReference>
<dbReference type="GO" id="GO:0070043">
    <property type="term" value="F:rRNA (guanine-N7-)-methyltransferase activity"/>
    <property type="evidence" value="ECO:0007669"/>
    <property type="project" value="UniProtKB-UniRule"/>
</dbReference>
<dbReference type="CDD" id="cd02440">
    <property type="entry name" value="AdoMet_MTases"/>
    <property type="match status" value="1"/>
</dbReference>
<dbReference type="Gene3D" id="3.40.50.150">
    <property type="entry name" value="Vaccinia Virus protein VP39"/>
    <property type="match status" value="1"/>
</dbReference>
<dbReference type="HAMAP" id="MF_00074">
    <property type="entry name" value="16SrRNA_methyltr_G"/>
    <property type="match status" value="1"/>
</dbReference>
<dbReference type="InterPro" id="IPR003682">
    <property type="entry name" value="rRNA_ssu_MeTfrase_G"/>
</dbReference>
<dbReference type="InterPro" id="IPR029063">
    <property type="entry name" value="SAM-dependent_MTases_sf"/>
</dbReference>
<dbReference type="NCBIfam" id="TIGR00138">
    <property type="entry name" value="rsmG_gidB"/>
    <property type="match status" value="1"/>
</dbReference>
<dbReference type="PANTHER" id="PTHR31760">
    <property type="entry name" value="S-ADENOSYL-L-METHIONINE-DEPENDENT METHYLTRANSFERASES SUPERFAMILY PROTEIN"/>
    <property type="match status" value="1"/>
</dbReference>
<dbReference type="PANTHER" id="PTHR31760:SF0">
    <property type="entry name" value="S-ADENOSYL-L-METHIONINE-DEPENDENT METHYLTRANSFERASES SUPERFAMILY PROTEIN"/>
    <property type="match status" value="1"/>
</dbReference>
<dbReference type="Pfam" id="PF02527">
    <property type="entry name" value="GidB"/>
    <property type="match status" value="1"/>
</dbReference>
<dbReference type="PIRSF" id="PIRSF003078">
    <property type="entry name" value="GidB"/>
    <property type="match status" value="1"/>
</dbReference>
<dbReference type="SUPFAM" id="SSF53335">
    <property type="entry name" value="S-adenosyl-L-methionine-dependent methyltransferases"/>
    <property type="match status" value="1"/>
</dbReference>
<sequence length="232" mass="24796">MTVQQRRRPPIASRETLQALLSEGAQALGVALSDAQRGALLDYVALLAKWNAVYNLTAIRDPRQMLIQHILDSLSIVPHLGAHGAAAAALDVGSGGGLPGVVLAIALPGWRVTLNDIVHKKSAFQNQAKAELKLGNLSVVTGRVETLRPGADVPAKFDVIVSRAFADLADFVTLARHLVAPGGSIWAMKGVRPDEEIGRLPDGARVKQMIRLTVPSLDAERHLIEVELDEAI</sequence>
<gene>
    <name evidence="1" type="primary">rsmG</name>
    <name type="ordered locus">BURPS1710b_0189</name>
</gene>
<accession>Q3JXU8</accession>
<keyword id="KW-0963">Cytoplasm</keyword>
<keyword id="KW-0489">Methyltransferase</keyword>
<keyword id="KW-0698">rRNA processing</keyword>
<keyword id="KW-0949">S-adenosyl-L-methionine</keyword>
<keyword id="KW-0808">Transferase</keyword>
<feature type="chain" id="PRO_0000335324" description="Ribosomal RNA small subunit methyltransferase G">
    <location>
        <begin position="1"/>
        <end position="232"/>
    </location>
</feature>
<feature type="binding site" evidence="1">
    <location>
        <position position="93"/>
    </location>
    <ligand>
        <name>S-adenosyl-L-methionine</name>
        <dbReference type="ChEBI" id="CHEBI:59789"/>
    </ligand>
</feature>
<feature type="binding site" evidence="1">
    <location>
        <position position="98"/>
    </location>
    <ligand>
        <name>S-adenosyl-L-methionine</name>
        <dbReference type="ChEBI" id="CHEBI:59789"/>
    </ligand>
</feature>
<feature type="binding site" evidence="1">
    <location>
        <begin position="144"/>
        <end position="145"/>
    </location>
    <ligand>
        <name>S-adenosyl-L-methionine</name>
        <dbReference type="ChEBI" id="CHEBI:59789"/>
    </ligand>
</feature>
<feature type="binding site" evidence="1">
    <location>
        <position position="163"/>
    </location>
    <ligand>
        <name>S-adenosyl-L-methionine</name>
        <dbReference type="ChEBI" id="CHEBI:59789"/>
    </ligand>
</feature>
<organism>
    <name type="scientific">Burkholderia pseudomallei (strain 1710b)</name>
    <dbReference type="NCBI Taxonomy" id="320372"/>
    <lineage>
        <taxon>Bacteria</taxon>
        <taxon>Pseudomonadati</taxon>
        <taxon>Pseudomonadota</taxon>
        <taxon>Betaproteobacteria</taxon>
        <taxon>Burkholderiales</taxon>
        <taxon>Burkholderiaceae</taxon>
        <taxon>Burkholderia</taxon>
        <taxon>pseudomallei group</taxon>
    </lineage>
</organism>
<reference key="1">
    <citation type="journal article" date="2010" name="Genome Biol. Evol.">
        <title>Continuing evolution of Burkholderia mallei through genome reduction and large-scale rearrangements.</title>
        <authorList>
            <person name="Losada L."/>
            <person name="Ronning C.M."/>
            <person name="DeShazer D."/>
            <person name="Woods D."/>
            <person name="Fedorova N."/>
            <person name="Kim H.S."/>
            <person name="Shabalina S.A."/>
            <person name="Pearson T.R."/>
            <person name="Brinkac L."/>
            <person name="Tan P."/>
            <person name="Nandi T."/>
            <person name="Crabtree J."/>
            <person name="Badger J."/>
            <person name="Beckstrom-Sternberg S."/>
            <person name="Saqib M."/>
            <person name="Schutzer S.E."/>
            <person name="Keim P."/>
            <person name="Nierman W.C."/>
        </authorList>
    </citation>
    <scope>NUCLEOTIDE SEQUENCE [LARGE SCALE GENOMIC DNA]</scope>
    <source>
        <strain>1710b</strain>
    </source>
</reference>
<evidence type="ECO:0000255" key="1">
    <source>
        <dbReference type="HAMAP-Rule" id="MF_00074"/>
    </source>
</evidence>
<proteinExistence type="inferred from homology"/>
<protein>
    <recommendedName>
        <fullName evidence="1">Ribosomal RNA small subunit methyltransferase G</fullName>
        <ecNumber evidence="1">2.1.1.170</ecNumber>
    </recommendedName>
    <alternativeName>
        <fullName evidence="1">16S rRNA 7-methylguanosine methyltransferase</fullName>
        <shortName evidence="1">16S rRNA m7G methyltransferase</shortName>
    </alternativeName>
</protein>
<comment type="function">
    <text evidence="1">Specifically methylates the N7 position of guanine in position 527 of 16S rRNA.</text>
</comment>
<comment type="catalytic activity">
    <reaction evidence="1">
        <text>guanosine(527) in 16S rRNA + S-adenosyl-L-methionine = N(7)-methylguanosine(527) in 16S rRNA + S-adenosyl-L-homocysteine</text>
        <dbReference type="Rhea" id="RHEA:42732"/>
        <dbReference type="Rhea" id="RHEA-COMP:10209"/>
        <dbReference type="Rhea" id="RHEA-COMP:10210"/>
        <dbReference type="ChEBI" id="CHEBI:57856"/>
        <dbReference type="ChEBI" id="CHEBI:59789"/>
        <dbReference type="ChEBI" id="CHEBI:74269"/>
        <dbReference type="ChEBI" id="CHEBI:74480"/>
        <dbReference type="EC" id="2.1.1.170"/>
    </reaction>
</comment>
<comment type="subcellular location">
    <subcellularLocation>
        <location evidence="1">Cytoplasm</location>
    </subcellularLocation>
</comment>
<comment type="similarity">
    <text evidence="1">Belongs to the methyltransferase superfamily. RNA methyltransferase RsmG family.</text>
</comment>